<feature type="chain" id="PRO_0000434733" description="PPi-type phosphoenolpyruvate carboxykinase">
    <location>
        <begin position="1"/>
        <end position="1131"/>
    </location>
</feature>
<name>PEPCK_PROFF</name>
<dbReference type="EC" id="4.1.1.38" evidence="1"/>
<dbReference type="EMBL" id="CP010341">
    <property type="protein sequence ID" value="AJQ89945.1"/>
    <property type="molecule type" value="Genomic_DNA"/>
</dbReference>
<dbReference type="RefSeq" id="WP_044635901.1">
    <property type="nucleotide sequence ID" value="NZ_CP010341.1"/>
</dbReference>
<dbReference type="SMR" id="A0A0C5URS1"/>
<dbReference type="KEGG" id="pfre:RM25_0213"/>
<dbReference type="PATRIC" id="fig|66712.6.peg.219"/>
<dbReference type="HOGENOM" id="CLU_275663_0_0_11"/>
<dbReference type="GO" id="GO:0030585">
    <property type="term" value="F:phosphoenolpyruvate carboxykinase (diphosphate) activity"/>
    <property type="evidence" value="ECO:0000314"/>
    <property type="project" value="UniProtKB"/>
</dbReference>
<organism>
    <name type="scientific">Propionibacterium freudenreichii subsp. freudenreichii</name>
    <dbReference type="NCBI Taxonomy" id="66712"/>
    <lineage>
        <taxon>Bacteria</taxon>
        <taxon>Bacillati</taxon>
        <taxon>Actinomycetota</taxon>
        <taxon>Actinomycetes</taxon>
        <taxon>Propionibacteriales</taxon>
        <taxon>Propionibacteriaceae</taxon>
        <taxon>Propionibacterium</taxon>
    </lineage>
</organism>
<sequence>MSVVERRQINAAINLRLSLLGLPHPDSNAESPDAILVEPLLARQRELSRRLKDRLSAPDLRIQRFLDDYLADCDEHPQLPRTTLVLDEPGLARGLSLPVDGDEFHSDIVASYRLVNGVLHNPKHDRRTTAGVFHISTGGLPIPQDKVEVDKNVYARILARAFQAPDEELALPYTANLPEQAHCWASLLMRPTVLPAVPGRTTEKSYEVHFIVPGGLMCNLDFVEGIFGNAGDPYLPENDASLDPDSWTGHTGCVILAPHLTTMTKKSLGMPHYDDATERQRRDGQCWRHEDDLYNDGKAFKVCARDERGVIVTVIADNYFGYCKKEVKTQISYSANLLGGAEEEHSGGAEVYPAWNLNQDFTDRTPDDFTLADVISTNRELLDVRPEGYAVYKPEPNIVFIPEHSHYSMRTQTISWTAHGAEQTIKLLAGKHYLSPDGYRIHAKHREMDATQWHLIGTSSRAVTCHKPATVSGGGKSEISKSISDAFVFGNAFSHDIDSAMDQVQALFDTDFTNRFADASRNGTDHRPVLSIDRSLGSVIKLLTPSIQYNDEYNAFLEGIEPDVKELAFTVKRYYLPEWGEDWRSHFTVGIMNGRHGNMVRLDGKKIITNMLRVGFREDGSWRLFTLRPDYSPAVKVQTEDDITASTVTPPWEDAEGLPRKYVTNCEHLLFQRPDDAIHRGYDKQAEFDLASGTDTFISNFEPLTHEQARDLLTDVQAYSEFTKPVRKLIERVAAMPDDQSPEFWVCSDDPRHLPDGGRSKNPRYLQVRPTDSNPELTTVADVAGKLARKLPLAGHAPQPIDVVAAGRRNNPPEDKVPALCAYNPLHYMELPELFMEYISSMTGKSPSTTGAGSEGALTKGPFNALPAVYDLNAALLSYALTDYDGWLSSAGYIGPNARVDHDISMLIPELFSHMGPNDRNTKRLISEGYLEKMQDFDFDGHRVLASRLGYRINDRFVTHYFGRIFLHPDVVFSEEMLRPELQDEKIFADSIDVIVKTHQRVAQMYFDDGTVSLACPPIRALLEIMAHGASAEGWTLDSPEFRKLFERESVLASDWYAQRLDAKQAEDVKQAEEGVERLKEYIGRSDSGSVTGRLHLADRLRELEAQLTYERSPEYRQSLVGTLGRQPRFV</sequence>
<proteinExistence type="evidence at protein level"/>
<evidence type="ECO:0000269" key="1">
    <source>
    </source>
</evidence>
<evidence type="ECO:0000303" key="2">
    <source>
    </source>
</evidence>
<evidence type="ECO:0000305" key="3"/>
<evidence type="ECO:0000312" key="4">
    <source>
        <dbReference type="EMBL" id="AJQ89945.1"/>
    </source>
</evidence>
<comment type="function">
    <text evidence="1">Inorganic pyrophosphate (PPi)-dependent phosphoenolpyruvate carboxykinase, which regulates the carbon flow of the central metabolism by fixing CO(2) to phosphoenolpyruvate to produce oxaloacetate. Can also produce pyruvate and diphosphate from phosphoenolpyruvate and phosphate.</text>
</comment>
<comment type="catalytic activity">
    <reaction evidence="1">
        <text>oxaloacetate + diphosphate = phosphoenolpyruvate + phosphate + CO2</text>
        <dbReference type="Rhea" id="RHEA:22356"/>
        <dbReference type="ChEBI" id="CHEBI:16452"/>
        <dbReference type="ChEBI" id="CHEBI:16526"/>
        <dbReference type="ChEBI" id="CHEBI:33019"/>
        <dbReference type="ChEBI" id="CHEBI:43474"/>
        <dbReference type="ChEBI" id="CHEBI:58702"/>
        <dbReference type="EC" id="4.1.1.38"/>
    </reaction>
</comment>
<comment type="subunit">
    <text evidence="1">Monomer and trimer; forms heterotrimers with PEPCK2 and PEPCK3.</text>
</comment>
<comment type="similarity">
    <text evidence="3">Belongs to the PPi-type phosphoenolpyruvate carboxykinase family.</text>
</comment>
<gene>
    <name evidence="4" type="ORF">RM25_0213</name>
</gene>
<accession>A0A0C5URS1</accession>
<reference key="1">
    <citation type="submission" date="2014-12" db="EMBL/GenBank/DDBJ databases">
        <title>Complete genome sequence of Propionibacterium freudenreichii DSM 20271T.</title>
        <authorList>
            <person name="Koskinen P."/>
            <person name="Deptula P."/>
            <person name="Smolander O.-P."/>
            <person name="Kammonen J."/>
            <person name="Savijoki K."/>
            <person name="Paulin L."/>
            <person name="Piironen V."/>
            <person name="Auvinen P."/>
            <person name="Varmanen P."/>
        </authorList>
    </citation>
    <scope>NUCLEOTIDE SEQUENCE [LARGE SCALE GENOMIC DNA]</scope>
    <source>
        <strain evidence="4">ATCC 6207 / DSM 20271 / LMG 16412 / NBRC 12424 / NCIMB 5959 / NCTC 10470 / NRRL B-3523</strain>
    </source>
</reference>
<reference key="2">
    <citation type="journal article" date="2015" name="J. Biol. Chem.">
        <title>Discovery of PPi-type phosphoenolpyruvate carboxykinase genes in eukaryotes and bacteria.</title>
        <authorList>
            <person name="Chiba Y."/>
            <person name="Kamikawa R."/>
            <person name="Nakada-Tsukui K."/>
            <person name="Saito-Nakano Y."/>
            <person name="Nozaki T."/>
        </authorList>
    </citation>
    <scope>FUNCTION</scope>
    <scope>CATALYTIC ACTIVITY</scope>
</reference>
<protein>
    <recommendedName>
        <fullName evidence="2">PPi-type phosphoenolpyruvate carboxykinase</fullName>
        <shortName evidence="2">PPi-PEPCK</shortName>
        <shortName evidence="2">PfPEPCK</shortName>
        <ecNumber evidence="1">4.1.1.38</ecNumber>
    </recommendedName>
    <alternativeName>
        <fullName evidence="3">Diphosphate-dependent phosphoenolpyruvate carboxykinase</fullName>
    </alternativeName>
    <alternativeName>
        <fullName evidence="3">PEP carboxyphosphotransferase</fullName>
    </alternativeName>
</protein>
<keyword id="KW-0210">Decarboxylase</keyword>
<keyword id="KW-0456">Lyase</keyword>